<feature type="chain" id="PRO_0000207781" description="Photosystem I reaction center subunit IX">
    <location>
        <begin position="1"/>
        <end position="42"/>
    </location>
</feature>
<feature type="transmembrane region" description="Helical" evidence="1">
    <location>
        <begin position="7"/>
        <end position="27"/>
    </location>
</feature>
<gene>
    <name evidence="1" type="primary">psaJ</name>
</gene>
<accession>Q859W0</accession>
<organism>
    <name type="scientific">Anthoceros angustus</name>
    <name type="common">Hornwort</name>
    <name type="synonym">Anthoceros formosae</name>
    <dbReference type="NCBI Taxonomy" id="48387"/>
    <lineage>
        <taxon>Eukaryota</taxon>
        <taxon>Viridiplantae</taxon>
        <taxon>Streptophyta</taxon>
        <taxon>Embryophyta</taxon>
        <taxon>Anthocerotophyta</taxon>
        <taxon>Anthocerotopsida</taxon>
        <taxon>Anthocerotidae</taxon>
        <taxon>Anthocerotales</taxon>
        <taxon>Anthocerotaceae</taxon>
        <taxon>Anthoceros</taxon>
    </lineage>
</organism>
<name>PSAJ_ANTAG</name>
<keyword id="KW-0150">Chloroplast</keyword>
<keyword id="KW-0472">Membrane</keyword>
<keyword id="KW-0602">Photosynthesis</keyword>
<keyword id="KW-0603">Photosystem I</keyword>
<keyword id="KW-0934">Plastid</keyword>
<keyword id="KW-0793">Thylakoid</keyword>
<keyword id="KW-0812">Transmembrane</keyword>
<keyword id="KW-1133">Transmembrane helix</keyword>
<dbReference type="EMBL" id="AB086179">
    <property type="protein sequence ID" value="BAC55369.1"/>
    <property type="molecule type" value="Genomic_DNA"/>
</dbReference>
<dbReference type="EMBL" id="AB087457">
    <property type="protein sequence ID" value="BAC55465.1"/>
    <property type="molecule type" value="mRNA"/>
</dbReference>
<dbReference type="RefSeq" id="NP_777433.1">
    <property type="nucleotide sequence ID" value="NC_004543.1"/>
</dbReference>
<dbReference type="SMR" id="Q859W0"/>
<dbReference type="GeneID" id="2553394"/>
<dbReference type="GO" id="GO:0009535">
    <property type="term" value="C:chloroplast thylakoid membrane"/>
    <property type="evidence" value="ECO:0007669"/>
    <property type="project" value="UniProtKB-SubCell"/>
</dbReference>
<dbReference type="GO" id="GO:0009522">
    <property type="term" value="C:photosystem I"/>
    <property type="evidence" value="ECO:0007669"/>
    <property type="project" value="UniProtKB-KW"/>
</dbReference>
<dbReference type="GO" id="GO:0015979">
    <property type="term" value="P:photosynthesis"/>
    <property type="evidence" value="ECO:0007669"/>
    <property type="project" value="UniProtKB-UniRule"/>
</dbReference>
<dbReference type="Gene3D" id="1.20.5.510">
    <property type="entry name" value="Single helix bin"/>
    <property type="match status" value="1"/>
</dbReference>
<dbReference type="HAMAP" id="MF_00522">
    <property type="entry name" value="PSI_PsaJ"/>
    <property type="match status" value="1"/>
</dbReference>
<dbReference type="InterPro" id="IPR002615">
    <property type="entry name" value="PSI_PsaJ"/>
</dbReference>
<dbReference type="InterPro" id="IPR036062">
    <property type="entry name" value="PSI_PsaJ_sf"/>
</dbReference>
<dbReference type="PANTHER" id="PTHR36082">
    <property type="match status" value="1"/>
</dbReference>
<dbReference type="PANTHER" id="PTHR36082:SF2">
    <property type="entry name" value="PHOTOSYSTEM I REACTION CENTER SUBUNIT IX"/>
    <property type="match status" value="1"/>
</dbReference>
<dbReference type="Pfam" id="PF01701">
    <property type="entry name" value="PSI_PsaJ"/>
    <property type="match status" value="1"/>
</dbReference>
<dbReference type="SUPFAM" id="SSF81544">
    <property type="entry name" value="Subunit IX of photosystem I reaction centre, PsaJ"/>
    <property type="match status" value="1"/>
</dbReference>
<comment type="function">
    <text evidence="1">May help in the organization of the PsaE and PsaF subunits.</text>
</comment>
<comment type="subcellular location">
    <subcellularLocation>
        <location evidence="1">Plastid</location>
        <location evidence="1">Chloroplast thylakoid membrane</location>
        <topology evidence="1">Single-pass membrane protein</topology>
    </subcellularLocation>
</comment>
<comment type="similarity">
    <text evidence="1">Belongs to the PsaJ family.</text>
</comment>
<reference key="1">
    <citation type="journal article" date="2003" name="Nucleic Acids Res.">
        <title>The complete nucleotide sequence of the hornwort (Anthoceros formosae) chloroplast genome: insight into the earliest land plants.</title>
        <authorList>
            <person name="Kugita M."/>
            <person name="Kaneko A."/>
            <person name="Yamamoto Y."/>
            <person name="Takeya Y."/>
            <person name="Matsumoto T."/>
            <person name="Yoshinaga K."/>
        </authorList>
    </citation>
    <scope>NUCLEOTIDE SEQUENCE [LARGE SCALE GENOMIC DNA]</scope>
</reference>
<reference key="2">
    <citation type="journal article" date="2003" name="Nucleic Acids Res.">
        <title>RNA editing in hornwort chloroplasts makes more than half the genes functional.</title>
        <authorList>
            <person name="Kugita M."/>
            <person name="Yamamoto Y."/>
            <person name="Fujikawa T."/>
            <person name="Matsumoto T."/>
            <person name="Yoshinaga K."/>
        </authorList>
    </citation>
    <scope>NUCLEOTIDE SEQUENCE [MRNA]</scope>
    <scope>ABSENCE OF RNA EDITING</scope>
    <source>
        <tissue>Thallus</tissue>
    </source>
</reference>
<sequence length="42" mass="4707">MQDVKTYLSTAPVLATLWFGFLAGLLIEINRSFSDALVLPFF</sequence>
<evidence type="ECO:0000255" key="1">
    <source>
        <dbReference type="HAMAP-Rule" id="MF_00522"/>
    </source>
</evidence>
<geneLocation type="chloroplast"/>
<proteinExistence type="evidence at transcript level"/>
<protein>
    <recommendedName>
        <fullName evidence="1">Photosystem I reaction center subunit IX</fullName>
    </recommendedName>
    <alternativeName>
        <fullName evidence="1">PSI-J</fullName>
    </alternativeName>
</protein>